<keyword id="KW-0687">Ribonucleoprotein</keyword>
<keyword id="KW-0689">Ribosomal protein</keyword>
<keyword id="KW-0694">RNA-binding</keyword>
<keyword id="KW-0699">rRNA-binding</keyword>
<comment type="function">
    <text evidence="1">This protein binds to the 23S rRNA, and is important in its secondary structure. It is located near the subunit interface in the base of the L7/L12 stalk, and near the tRNA binding site of the peptidyltransferase center.</text>
</comment>
<comment type="subunit">
    <text evidence="1">Part of the 50S ribosomal subunit.</text>
</comment>
<comment type="similarity">
    <text evidence="1">Belongs to the universal ribosomal protein uL6 family.</text>
</comment>
<organism>
    <name type="scientific">Neisseria meningitidis serogroup C (strain 053442)</name>
    <dbReference type="NCBI Taxonomy" id="374833"/>
    <lineage>
        <taxon>Bacteria</taxon>
        <taxon>Pseudomonadati</taxon>
        <taxon>Pseudomonadota</taxon>
        <taxon>Betaproteobacteria</taxon>
        <taxon>Neisseriales</taxon>
        <taxon>Neisseriaceae</taxon>
        <taxon>Neisseria</taxon>
    </lineage>
</organism>
<protein>
    <recommendedName>
        <fullName evidence="1">Large ribosomal subunit protein uL6</fullName>
    </recommendedName>
    <alternativeName>
        <fullName evidence="2">50S ribosomal protein L6</fullName>
    </alternativeName>
</protein>
<reference key="1">
    <citation type="journal article" date="2008" name="Genomics">
        <title>Characterization of ST-4821 complex, a unique Neisseria meningitidis clone.</title>
        <authorList>
            <person name="Peng J."/>
            <person name="Yang L."/>
            <person name="Yang F."/>
            <person name="Yang J."/>
            <person name="Yan Y."/>
            <person name="Nie H."/>
            <person name="Zhang X."/>
            <person name="Xiong Z."/>
            <person name="Jiang Y."/>
            <person name="Cheng F."/>
            <person name="Xu X."/>
            <person name="Chen S."/>
            <person name="Sun L."/>
            <person name="Li W."/>
            <person name="Shen Y."/>
            <person name="Shao Z."/>
            <person name="Liang X."/>
            <person name="Xu J."/>
            <person name="Jin Q."/>
        </authorList>
    </citation>
    <scope>NUCLEOTIDE SEQUENCE [LARGE SCALE GENOMIC DNA]</scope>
    <source>
        <strain>053442</strain>
    </source>
</reference>
<evidence type="ECO:0000255" key="1">
    <source>
        <dbReference type="HAMAP-Rule" id="MF_01365"/>
    </source>
</evidence>
<evidence type="ECO:0000305" key="2"/>
<gene>
    <name evidence="1" type="primary">rplF</name>
    <name type="ordered locus">NMCC_1992</name>
</gene>
<accession>A9M3V1</accession>
<sequence length="177" mass="18904">MSRVAKNPVTVPAGVEVKFGTEALVIKGKNGELSFPLHSDVAIEFNDGKLAFVANNSSKQANAMSGTARALVSNMVKGVSEGFEKRLQLIGVGYRAQAQGKILNLSLGFSHPIVYEMPEGVSVQTPSQTEIVLTGSDKQVVGQVAAEIRAFRAPEPYKGKGVRYVGEVVVMKEAKKK</sequence>
<dbReference type="EMBL" id="CP000381">
    <property type="protein sequence ID" value="ABX74115.1"/>
    <property type="molecule type" value="Genomic_DNA"/>
</dbReference>
<dbReference type="RefSeq" id="WP_002225947.1">
    <property type="nucleotide sequence ID" value="NC_010120.1"/>
</dbReference>
<dbReference type="SMR" id="A9M3V1"/>
<dbReference type="KEGG" id="nmn:NMCC_1992"/>
<dbReference type="HOGENOM" id="CLU_065464_1_2_4"/>
<dbReference type="Proteomes" id="UP000001177">
    <property type="component" value="Chromosome"/>
</dbReference>
<dbReference type="GO" id="GO:0022625">
    <property type="term" value="C:cytosolic large ribosomal subunit"/>
    <property type="evidence" value="ECO:0007669"/>
    <property type="project" value="TreeGrafter"/>
</dbReference>
<dbReference type="GO" id="GO:0019843">
    <property type="term" value="F:rRNA binding"/>
    <property type="evidence" value="ECO:0007669"/>
    <property type="project" value="UniProtKB-UniRule"/>
</dbReference>
<dbReference type="GO" id="GO:0003735">
    <property type="term" value="F:structural constituent of ribosome"/>
    <property type="evidence" value="ECO:0007669"/>
    <property type="project" value="InterPro"/>
</dbReference>
<dbReference type="GO" id="GO:0002181">
    <property type="term" value="P:cytoplasmic translation"/>
    <property type="evidence" value="ECO:0007669"/>
    <property type="project" value="TreeGrafter"/>
</dbReference>
<dbReference type="FunFam" id="3.90.930.12:FF:000001">
    <property type="entry name" value="50S ribosomal protein L6"/>
    <property type="match status" value="1"/>
</dbReference>
<dbReference type="FunFam" id="3.90.930.12:FF:000002">
    <property type="entry name" value="50S ribosomal protein L6"/>
    <property type="match status" value="1"/>
</dbReference>
<dbReference type="Gene3D" id="3.90.930.12">
    <property type="entry name" value="Ribosomal protein L6, alpha-beta domain"/>
    <property type="match status" value="2"/>
</dbReference>
<dbReference type="HAMAP" id="MF_01365_B">
    <property type="entry name" value="Ribosomal_uL6_B"/>
    <property type="match status" value="1"/>
</dbReference>
<dbReference type="InterPro" id="IPR000702">
    <property type="entry name" value="Ribosomal_uL6-like"/>
</dbReference>
<dbReference type="InterPro" id="IPR036789">
    <property type="entry name" value="Ribosomal_uL6-like_a/b-dom_sf"/>
</dbReference>
<dbReference type="InterPro" id="IPR020040">
    <property type="entry name" value="Ribosomal_uL6_a/b-dom"/>
</dbReference>
<dbReference type="InterPro" id="IPR019906">
    <property type="entry name" value="Ribosomal_uL6_bac-type"/>
</dbReference>
<dbReference type="InterPro" id="IPR002358">
    <property type="entry name" value="Ribosomal_uL6_CS"/>
</dbReference>
<dbReference type="NCBIfam" id="TIGR03654">
    <property type="entry name" value="L6_bact"/>
    <property type="match status" value="1"/>
</dbReference>
<dbReference type="PANTHER" id="PTHR11655">
    <property type="entry name" value="60S/50S RIBOSOMAL PROTEIN L6/L9"/>
    <property type="match status" value="1"/>
</dbReference>
<dbReference type="PANTHER" id="PTHR11655:SF14">
    <property type="entry name" value="LARGE RIBOSOMAL SUBUNIT PROTEIN UL6M"/>
    <property type="match status" value="1"/>
</dbReference>
<dbReference type="Pfam" id="PF00347">
    <property type="entry name" value="Ribosomal_L6"/>
    <property type="match status" value="2"/>
</dbReference>
<dbReference type="PIRSF" id="PIRSF002162">
    <property type="entry name" value="Ribosomal_L6"/>
    <property type="match status" value="1"/>
</dbReference>
<dbReference type="PRINTS" id="PR00059">
    <property type="entry name" value="RIBOSOMALL6"/>
</dbReference>
<dbReference type="SUPFAM" id="SSF56053">
    <property type="entry name" value="Ribosomal protein L6"/>
    <property type="match status" value="2"/>
</dbReference>
<dbReference type="PROSITE" id="PS00525">
    <property type="entry name" value="RIBOSOMAL_L6_1"/>
    <property type="match status" value="1"/>
</dbReference>
<proteinExistence type="inferred from homology"/>
<feature type="chain" id="PRO_1000087052" description="Large ribosomal subunit protein uL6">
    <location>
        <begin position="1"/>
        <end position="177"/>
    </location>
</feature>
<name>RL6_NEIM0</name>